<gene>
    <name evidence="1" type="primary">nrdR</name>
    <name type="ordered locus">BT9727_4311</name>
</gene>
<sequence>MRCPSCSHNGTRVLDSRPVDEGRSIRRRRECESCLSRFTTFERVEESPLIVVKKEGTREEFNKEKILRGLIKACEKRPVSLRQLEEVTQSVERELRNLGISEVKSDMIGEIVMEELRDIDDVAYVRFASVYRQFKDLNVFIEELKDILQKERE</sequence>
<keyword id="KW-0067">ATP-binding</keyword>
<keyword id="KW-0238">DNA-binding</keyword>
<keyword id="KW-0479">Metal-binding</keyword>
<keyword id="KW-0547">Nucleotide-binding</keyword>
<keyword id="KW-0678">Repressor</keyword>
<keyword id="KW-0804">Transcription</keyword>
<keyword id="KW-0805">Transcription regulation</keyword>
<keyword id="KW-0862">Zinc</keyword>
<keyword id="KW-0863">Zinc-finger</keyword>
<reference key="1">
    <citation type="journal article" date="2006" name="J. Bacteriol.">
        <title>Pathogenomic sequence analysis of Bacillus cereus and Bacillus thuringiensis isolates closely related to Bacillus anthracis.</title>
        <authorList>
            <person name="Han C.S."/>
            <person name="Xie G."/>
            <person name="Challacombe J.F."/>
            <person name="Altherr M.R."/>
            <person name="Bhotika S.S."/>
            <person name="Bruce D."/>
            <person name="Campbell C.S."/>
            <person name="Campbell M.L."/>
            <person name="Chen J."/>
            <person name="Chertkov O."/>
            <person name="Cleland C."/>
            <person name="Dimitrijevic M."/>
            <person name="Doggett N.A."/>
            <person name="Fawcett J.J."/>
            <person name="Glavina T."/>
            <person name="Goodwin L.A."/>
            <person name="Hill K.K."/>
            <person name="Hitchcock P."/>
            <person name="Jackson P.J."/>
            <person name="Keim P."/>
            <person name="Kewalramani A.R."/>
            <person name="Longmire J."/>
            <person name="Lucas S."/>
            <person name="Malfatti S."/>
            <person name="McMurry K."/>
            <person name="Meincke L.J."/>
            <person name="Misra M."/>
            <person name="Moseman B.L."/>
            <person name="Mundt M."/>
            <person name="Munk A.C."/>
            <person name="Okinaka R.T."/>
            <person name="Parson-Quintana B."/>
            <person name="Reilly L.P."/>
            <person name="Richardson P."/>
            <person name="Robinson D.L."/>
            <person name="Rubin E."/>
            <person name="Saunders E."/>
            <person name="Tapia R."/>
            <person name="Tesmer J.G."/>
            <person name="Thayer N."/>
            <person name="Thompson L.S."/>
            <person name="Tice H."/>
            <person name="Ticknor L.O."/>
            <person name="Wills P.L."/>
            <person name="Brettin T.S."/>
            <person name="Gilna P."/>
        </authorList>
    </citation>
    <scope>NUCLEOTIDE SEQUENCE [LARGE SCALE GENOMIC DNA]</scope>
    <source>
        <strain>97-27</strain>
    </source>
</reference>
<comment type="function">
    <text evidence="1">Negatively regulates transcription of bacterial ribonucleotide reductase nrd genes and operons by binding to NrdR-boxes.</text>
</comment>
<comment type="cofactor">
    <cofactor evidence="1">
        <name>Zn(2+)</name>
        <dbReference type="ChEBI" id="CHEBI:29105"/>
    </cofactor>
    <text evidence="1">Binds 1 zinc ion.</text>
</comment>
<comment type="similarity">
    <text evidence="1">Belongs to the NrdR family.</text>
</comment>
<feature type="chain" id="PRO_0000182266" description="Transcriptional repressor NrdR">
    <location>
        <begin position="1"/>
        <end position="153"/>
    </location>
</feature>
<feature type="domain" description="ATP-cone" evidence="1">
    <location>
        <begin position="49"/>
        <end position="139"/>
    </location>
</feature>
<feature type="zinc finger region" evidence="1">
    <location>
        <begin position="3"/>
        <end position="34"/>
    </location>
</feature>
<proteinExistence type="inferred from homology"/>
<dbReference type="EMBL" id="AE017355">
    <property type="protein sequence ID" value="AAT60894.1"/>
    <property type="molecule type" value="Genomic_DNA"/>
</dbReference>
<dbReference type="RefSeq" id="WP_001203687.1">
    <property type="nucleotide sequence ID" value="NC_005957.1"/>
</dbReference>
<dbReference type="RefSeq" id="YP_038626.1">
    <property type="nucleotide sequence ID" value="NC_005957.1"/>
</dbReference>
<dbReference type="SMR" id="Q6HCV0"/>
<dbReference type="GeneID" id="93006530"/>
<dbReference type="KEGG" id="btk:BT9727_4311"/>
<dbReference type="PATRIC" id="fig|281309.8.peg.4594"/>
<dbReference type="HOGENOM" id="CLU_108412_0_0_9"/>
<dbReference type="PRO" id="PR:Q6HCV0"/>
<dbReference type="Proteomes" id="UP000001301">
    <property type="component" value="Chromosome"/>
</dbReference>
<dbReference type="GO" id="GO:0005524">
    <property type="term" value="F:ATP binding"/>
    <property type="evidence" value="ECO:0007669"/>
    <property type="project" value="UniProtKB-KW"/>
</dbReference>
<dbReference type="GO" id="GO:0003677">
    <property type="term" value="F:DNA binding"/>
    <property type="evidence" value="ECO:0007669"/>
    <property type="project" value="UniProtKB-KW"/>
</dbReference>
<dbReference type="GO" id="GO:0008270">
    <property type="term" value="F:zinc ion binding"/>
    <property type="evidence" value="ECO:0007669"/>
    <property type="project" value="UniProtKB-UniRule"/>
</dbReference>
<dbReference type="GO" id="GO:0045892">
    <property type="term" value="P:negative regulation of DNA-templated transcription"/>
    <property type="evidence" value="ECO:0007669"/>
    <property type="project" value="UniProtKB-UniRule"/>
</dbReference>
<dbReference type="HAMAP" id="MF_00440">
    <property type="entry name" value="NrdR"/>
    <property type="match status" value="1"/>
</dbReference>
<dbReference type="InterPro" id="IPR005144">
    <property type="entry name" value="ATP-cone_dom"/>
</dbReference>
<dbReference type="InterPro" id="IPR055173">
    <property type="entry name" value="NrdR-like_N"/>
</dbReference>
<dbReference type="InterPro" id="IPR003796">
    <property type="entry name" value="RNR_NrdR-like"/>
</dbReference>
<dbReference type="NCBIfam" id="TIGR00244">
    <property type="entry name" value="transcriptional regulator NrdR"/>
    <property type="match status" value="1"/>
</dbReference>
<dbReference type="PANTHER" id="PTHR30455">
    <property type="entry name" value="TRANSCRIPTIONAL REPRESSOR NRDR"/>
    <property type="match status" value="1"/>
</dbReference>
<dbReference type="PANTHER" id="PTHR30455:SF2">
    <property type="entry name" value="TRANSCRIPTIONAL REPRESSOR NRDR"/>
    <property type="match status" value="1"/>
</dbReference>
<dbReference type="Pfam" id="PF03477">
    <property type="entry name" value="ATP-cone"/>
    <property type="match status" value="1"/>
</dbReference>
<dbReference type="Pfam" id="PF22811">
    <property type="entry name" value="Zn_ribbon_NrdR"/>
    <property type="match status" value="1"/>
</dbReference>
<dbReference type="PROSITE" id="PS51161">
    <property type="entry name" value="ATP_CONE"/>
    <property type="match status" value="1"/>
</dbReference>
<evidence type="ECO:0000255" key="1">
    <source>
        <dbReference type="HAMAP-Rule" id="MF_00440"/>
    </source>
</evidence>
<accession>Q6HCV0</accession>
<organism>
    <name type="scientific">Bacillus thuringiensis subsp. konkukian (strain 97-27)</name>
    <dbReference type="NCBI Taxonomy" id="281309"/>
    <lineage>
        <taxon>Bacteria</taxon>
        <taxon>Bacillati</taxon>
        <taxon>Bacillota</taxon>
        <taxon>Bacilli</taxon>
        <taxon>Bacillales</taxon>
        <taxon>Bacillaceae</taxon>
        <taxon>Bacillus</taxon>
        <taxon>Bacillus cereus group</taxon>
    </lineage>
</organism>
<protein>
    <recommendedName>
        <fullName evidence="1">Transcriptional repressor NrdR</fullName>
    </recommendedName>
</protein>
<name>NRDR_BACHK</name>